<reference key="1">
    <citation type="journal article" date="2005" name="Nucleic Acids Res.">
        <title>Genome dynamics and diversity of Shigella species, the etiologic agents of bacillary dysentery.</title>
        <authorList>
            <person name="Yang F."/>
            <person name="Yang J."/>
            <person name="Zhang X."/>
            <person name="Chen L."/>
            <person name="Jiang Y."/>
            <person name="Yan Y."/>
            <person name="Tang X."/>
            <person name="Wang J."/>
            <person name="Xiong Z."/>
            <person name="Dong J."/>
            <person name="Xue Y."/>
            <person name="Zhu Y."/>
            <person name="Xu X."/>
            <person name="Sun L."/>
            <person name="Chen S."/>
            <person name="Nie H."/>
            <person name="Peng J."/>
            <person name="Xu J."/>
            <person name="Wang Y."/>
            <person name="Yuan Z."/>
            <person name="Wen Y."/>
            <person name="Yao Z."/>
            <person name="Shen Y."/>
            <person name="Qiang B."/>
            <person name="Hou Y."/>
            <person name="Yu J."/>
            <person name="Jin Q."/>
        </authorList>
    </citation>
    <scope>NUCLEOTIDE SEQUENCE [LARGE SCALE GENOMIC DNA]</scope>
    <source>
        <strain>Sb227</strain>
    </source>
</reference>
<comment type="function">
    <text evidence="1">Catalyzes the conversion of (8S)-3',8-cyclo-7,8-dihydroguanosine 5'-triphosphate to cyclic pyranopterin monophosphate (cPMP).</text>
</comment>
<comment type="catalytic activity">
    <reaction evidence="1">
        <text>(8S)-3',8-cyclo-7,8-dihydroguanosine 5'-triphosphate = cyclic pyranopterin phosphate + diphosphate</text>
        <dbReference type="Rhea" id="RHEA:49580"/>
        <dbReference type="ChEBI" id="CHEBI:33019"/>
        <dbReference type="ChEBI" id="CHEBI:59648"/>
        <dbReference type="ChEBI" id="CHEBI:131766"/>
        <dbReference type="EC" id="4.6.1.17"/>
    </reaction>
</comment>
<comment type="pathway">
    <text evidence="1">Cofactor biosynthesis; molybdopterin biosynthesis.</text>
</comment>
<comment type="subunit">
    <text evidence="1">Homohexamer; trimer of dimers.</text>
</comment>
<comment type="similarity">
    <text evidence="1">Belongs to the MoaC family.</text>
</comment>
<gene>
    <name evidence="1" type="primary">moaC</name>
    <name type="ordered locus">SBO_0670</name>
</gene>
<organism>
    <name type="scientific">Shigella boydii serotype 4 (strain Sb227)</name>
    <dbReference type="NCBI Taxonomy" id="300268"/>
    <lineage>
        <taxon>Bacteria</taxon>
        <taxon>Pseudomonadati</taxon>
        <taxon>Pseudomonadota</taxon>
        <taxon>Gammaproteobacteria</taxon>
        <taxon>Enterobacterales</taxon>
        <taxon>Enterobacteriaceae</taxon>
        <taxon>Shigella</taxon>
    </lineage>
</organism>
<evidence type="ECO:0000255" key="1">
    <source>
        <dbReference type="HAMAP-Rule" id="MF_01224"/>
    </source>
</evidence>
<sequence length="161" mass="17467">MSQLTHINAAGEAHMVDVSAKAETVREARAEAFVTMRSETLAMIIDGRHHKGDVFATARIAGIQAAKRTWDLIPLCHPLMLSKVEVNLQAEPEHNRVRIETLCRLTGKTGVEMEALTAASVAALTIYDMCKAVQKDMVIGPVRLLAKSGGKSGDFKVEADD</sequence>
<feature type="chain" id="PRO_1000054143" description="Cyclic pyranopterin monophosphate synthase">
    <location>
        <begin position="1"/>
        <end position="161"/>
    </location>
</feature>
<feature type="active site" evidence="1">
    <location>
        <position position="128"/>
    </location>
</feature>
<feature type="binding site" evidence="1">
    <location>
        <begin position="75"/>
        <end position="77"/>
    </location>
    <ligand>
        <name>substrate</name>
    </ligand>
</feature>
<feature type="binding site" evidence="1">
    <location>
        <begin position="113"/>
        <end position="114"/>
    </location>
    <ligand>
        <name>substrate</name>
    </ligand>
</feature>
<keyword id="KW-0456">Lyase</keyword>
<keyword id="KW-0501">Molybdenum cofactor biosynthesis</keyword>
<proteinExistence type="inferred from homology"/>
<name>MOAC_SHIBS</name>
<protein>
    <recommendedName>
        <fullName evidence="1">Cyclic pyranopterin monophosphate synthase</fullName>
        <ecNumber evidence="1">4.6.1.17</ecNumber>
    </recommendedName>
    <alternativeName>
        <fullName evidence="1">Molybdenum cofactor biosynthesis protein C</fullName>
    </alternativeName>
</protein>
<accession>Q324A9</accession>
<dbReference type="EC" id="4.6.1.17" evidence="1"/>
<dbReference type="EMBL" id="CP000036">
    <property type="protein sequence ID" value="ABB65349.1"/>
    <property type="molecule type" value="Genomic_DNA"/>
</dbReference>
<dbReference type="RefSeq" id="WP_000080885.1">
    <property type="nucleotide sequence ID" value="NC_007613.1"/>
</dbReference>
<dbReference type="SMR" id="Q324A9"/>
<dbReference type="GeneID" id="86945666"/>
<dbReference type="KEGG" id="sbo:SBO_0670"/>
<dbReference type="HOGENOM" id="CLU_074693_1_1_6"/>
<dbReference type="UniPathway" id="UPA00344"/>
<dbReference type="Proteomes" id="UP000007067">
    <property type="component" value="Chromosome"/>
</dbReference>
<dbReference type="GO" id="GO:0061799">
    <property type="term" value="F:cyclic pyranopterin monophosphate synthase activity"/>
    <property type="evidence" value="ECO:0007669"/>
    <property type="project" value="UniProtKB-UniRule"/>
</dbReference>
<dbReference type="GO" id="GO:0006777">
    <property type="term" value="P:Mo-molybdopterin cofactor biosynthetic process"/>
    <property type="evidence" value="ECO:0007669"/>
    <property type="project" value="UniProtKB-UniRule"/>
</dbReference>
<dbReference type="CDD" id="cd01420">
    <property type="entry name" value="MoaC_PE"/>
    <property type="match status" value="1"/>
</dbReference>
<dbReference type="FunFam" id="3.30.70.640:FF:000001">
    <property type="entry name" value="Cyclic pyranopterin monophosphate synthase"/>
    <property type="match status" value="1"/>
</dbReference>
<dbReference type="Gene3D" id="3.30.70.640">
    <property type="entry name" value="Molybdopterin cofactor biosynthesis C (MoaC) domain"/>
    <property type="match status" value="1"/>
</dbReference>
<dbReference type="HAMAP" id="MF_01224_B">
    <property type="entry name" value="MoaC_B"/>
    <property type="match status" value="1"/>
</dbReference>
<dbReference type="InterPro" id="IPR023045">
    <property type="entry name" value="MoaC"/>
</dbReference>
<dbReference type="InterPro" id="IPR047594">
    <property type="entry name" value="MoaC_bact/euk"/>
</dbReference>
<dbReference type="InterPro" id="IPR036522">
    <property type="entry name" value="MoaC_sf"/>
</dbReference>
<dbReference type="InterPro" id="IPR050105">
    <property type="entry name" value="MoCo_biosynth_MoaA/MoaC"/>
</dbReference>
<dbReference type="InterPro" id="IPR002820">
    <property type="entry name" value="Mopterin_CF_biosynth-C_dom"/>
</dbReference>
<dbReference type="NCBIfam" id="TIGR00581">
    <property type="entry name" value="moaC"/>
    <property type="match status" value="1"/>
</dbReference>
<dbReference type="NCBIfam" id="NF006870">
    <property type="entry name" value="PRK09364.1"/>
    <property type="match status" value="1"/>
</dbReference>
<dbReference type="PANTHER" id="PTHR22960">
    <property type="entry name" value="MOLYBDOPTERIN COFACTOR SYNTHESIS PROTEIN A"/>
    <property type="match status" value="1"/>
</dbReference>
<dbReference type="Pfam" id="PF01967">
    <property type="entry name" value="MoaC"/>
    <property type="match status" value="1"/>
</dbReference>
<dbReference type="SUPFAM" id="SSF55040">
    <property type="entry name" value="Molybdenum cofactor biosynthesis protein C, MoaC"/>
    <property type="match status" value="1"/>
</dbReference>